<organism>
    <name type="scientific">Streptococcus pneumoniae serotype 19F (strain G54)</name>
    <dbReference type="NCBI Taxonomy" id="512566"/>
    <lineage>
        <taxon>Bacteria</taxon>
        <taxon>Bacillati</taxon>
        <taxon>Bacillota</taxon>
        <taxon>Bacilli</taxon>
        <taxon>Lactobacillales</taxon>
        <taxon>Streptococcaceae</taxon>
        <taxon>Streptococcus</taxon>
    </lineage>
</organism>
<protein>
    <recommendedName>
        <fullName evidence="1">Alanine racemase</fullName>
        <ecNumber evidence="1">5.1.1.1</ecNumber>
    </recommendedName>
</protein>
<proteinExistence type="inferred from homology"/>
<feature type="chain" id="PRO_1000138626" description="Alanine racemase">
    <location>
        <begin position="1"/>
        <end position="367"/>
    </location>
</feature>
<feature type="active site" description="Proton acceptor; specific for D-alanine" evidence="1">
    <location>
        <position position="40"/>
    </location>
</feature>
<feature type="active site" description="Proton acceptor; specific for L-alanine" evidence="1">
    <location>
        <position position="263"/>
    </location>
</feature>
<feature type="binding site" evidence="1">
    <location>
        <position position="136"/>
    </location>
    <ligand>
        <name>substrate</name>
    </ligand>
</feature>
<feature type="binding site" evidence="1">
    <location>
        <position position="310"/>
    </location>
    <ligand>
        <name>substrate</name>
    </ligand>
</feature>
<feature type="modified residue" description="N6-(pyridoxal phosphate)lysine" evidence="1">
    <location>
        <position position="40"/>
    </location>
</feature>
<name>ALR_STRP4</name>
<accession>B5E745</accession>
<sequence length="367" mass="39842">MKASPHRPTKALIHLGAIRQNIQQMGAHIPQGTLKLAVVKANAYGHGAVAVAKAIQDDVDGFCVSNIDEAIELRQAGLSKPILILGVSEIEAVALAKEYDFTLTVAGLEWIQALLDKEVDLTGLTVHLKIDSGMGRIGFREASEVEQAQDLLQQHGVCVEGIFTHFATADEESDDYFNAQLERFKTILASMKEVPELVHASNSATTLWHVETIFNAVRMGDAMYGLNPSGAVLDLPYDLIPALTLESALVHVKTVPAGACMGYGATYQADSEQVIATVPIGYADGWTRDMQNFSVLVDGQACPIVGRVSMDQITIRLPKPYPLGTKVTLIGSNGDKEITATQVATYRVTINYEVVCLLSDRIPREYY</sequence>
<keyword id="KW-0413">Isomerase</keyword>
<keyword id="KW-0663">Pyridoxal phosphate</keyword>
<comment type="function">
    <text evidence="1">Catalyzes the interconversion of L-alanine and D-alanine. May also act on other amino acids.</text>
</comment>
<comment type="catalytic activity">
    <reaction evidence="1">
        <text>L-alanine = D-alanine</text>
        <dbReference type="Rhea" id="RHEA:20249"/>
        <dbReference type="ChEBI" id="CHEBI:57416"/>
        <dbReference type="ChEBI" id="CHEBI:57972"/>
        <dbReference type="EC" id="5.1.1.1"/>
    </reaction>
</comment>
<comment type="cofactor">
    <cofactor evidence="1">
        <name>pyridoxal 5'-phosphate</name>
        <dbReference type="ChEBI" id="CHEBI:597326"/>
    </cofactor>
</comment>
<comment type="pathway">
    <text evidence="1">Amino-acid biosynthesis; D-alanine biosynthesis; D-alanine from L-alanine: step 1/1.</text>
</comment>
<comment type="similarity">
    <text evidence="1">Belongs to the alanine racemase family.</text>
</comment>
<reference key="1">
    <citation type="journal article" date="2001" name="Microb. Drug Resist.">
        <title>Annotated draft genomic sequence from a Streptococcus pneumoniae type 19F clinical isolate.</title>
        <authorList>
            <person name="Dopazo J."/>
            <person name="Mendoza A."/>
            <person name="Herrero J."/>
            <person name="Caldara F."/>
            <person name="Humbert Y."/>
            <person name="Friedli L."/>
            <person name="Guerrier M."/>
            <person name="Grand-Schenk E."/>
            <person name="Gandin C."/>
            <person name="de Francesco M."/>
            <person name="Polissi A."/>
            <person name="Buell G."/>
            <person name="Feger G."/>
            <person name="Garcia E."/>
            <person name="Peitsch M."/>
            <person name="Garcia-Bustos J.F."/>
        </authorList>
    </citation>
    <scope>NUCLEOTIDE SEQUENCE [LARGE SCALE GENOMIC DNA]</scope>
    <source>
        <strain>G54</strain>
    </source>
</reference>
<reference key="2">
    <citation type="submission" date="2008-03" db="EMBL/GenBank/DDBJ databases">
        <title>Pneumococcal beta glucoside metabolism investigated by whole genome comparison.</title>
        <authorList>
            <person name="Mulas L."/>
            <person name="Trappetti C."/>
            <person name="Hakenbeck R."/>
            <person name="Iannelli F."/>
            <person name="Pozzi G."/>
            <person name="Davidsen T.M."/>
            <person name="Tettelin H."/>
            <person name="Oggioni M."/>
        </authorList>
    </citation>
    <scope>NUCLEOTIDE SEQUENCE [LARGE SCALE GENOMIC DNA]</scope>
    <source>
        <strain>G54</strain>
    </source>
</reference>
<dbReference type="EC" id="5.1.1.1" evidence="1"/>
<dbReference type="EMBL" id="CP001015">
    <property type="protein sequence ID" value="ACF56812.1"/>
    <property type="molecule type" value="Genomic_DNA"/>
</dbReference>
<dbReference type="SMR" id="B5E745"/>
<dbReference type="KEGG" id="spx:SPG_1604"/>
<dbReference type="HOGENOM" id="CLU_028393_2_1_9"/>
<dbReference type="UniPathway" id="UPA00042">
    <property type="reaction ID" value="UER00497"/>
</dbReference>
<dbReference type="GO" id="GO:0005829">
    <property type="term" value="C:cytosol"/>
    <property type="evidence" value="ECO:0007669"/>
    <property type="project" value="TreeGrafter"/>
</dbReference>
<dbReference type="GO" id="GO:0008784">
    <property type="term" value="F:alanine racemase activity"/>
    <property type="evidence" value="ECO:0007669"/>
    <property type="project" value="UniProtKB-UniRule"/>
</dbReference>
<dbReference type="GO" id="GO:0030170">
    <property type="term" value="F:pyridoxal phosphate binding"/>
    <property type="evidence" value="ECO:0007669"/>
    <property type="project" value="UniProtKB-UniRule"/>
</dbReference>
<dbReference type="GO" id="GO:0030632">
    <property type="term" value="P:D-alanine biosynthetic process"/>
    <property type="evidence" value="ECO:0007669"/>
    <property type="project" value="UniProtKB-UniRule"/>
</dbReference>
<dbReference type="GO" id="GO:0009252">
    <property type="term" value="P:peptidoglycan biosynthetic process"/>
    <property type="evidence" value="ECO:0007669"/>
    <property type="project" value="TreeGrafter"/>
</dbReference>
<dbReference type="CDD" id="cd00430">
    <property type="entry name" value="PLPDE_III_AR"/>
    <property type="match status" value="1"/>
</dbReference>
<dbReference type="FunFam" id="2.40.37.10:FF:000006">
    <property type="entry name" value="Alanine racemase"/>
    <property type="match status" value="1"/>
</dbReference>
<dbReference type="FunFam" id="3.20.20.10:FF:000002">
    <property type="entry name" value="Alanine racemase"/>
    <property type="match status" value="1"/>
</dbReference>
<dbReference type="Gene3D" id="3.20.20.10">
    <property type="entry name" value="Alanine racemase"/>
    <property type="match status" value="1"/>
</dbReference>
<dbReference type="Gene3D" id="2.40.37.10">
    <property type="entry name" value="Lyase, Ornithine Decarboxylase, Chain A, domain 1"/>
    <property type="match status" value="1"/>
</dbReference>
<dbReference type="HAMAP" id="MF_01201">
    <property type="entry name" value="Ala_racemase"/>
    <property type="match status" value="1"/>
</dbReference>
<dbReference type="InterPro" id="IPR000821">
    <property type="entry name" value="Ala_racemase"/>
</dbReference>
<dbReference type="InterPro" id="IPR009006">
    <property type="entry name" value="Ala_racemase/Decarboxylase_C"/>
</dbReference>
<dbReference type="InterPro" id="IPR011079">
    <property type="entry name" value="Ala_racemase_C"/>
</dbReference>
<dbReference type="InterPro" id="IPR001608">
    <property type="entry name" value="Ala_racemase_N"/>
</dbReference>
<dbReference type="InterPro" id="IPR020622">
    <property type="entry name" value="Ala_racemase_pyridoxalP-BS"/>
</dbReference>
<dbReference type="InterPro" id="IPR029066">
    <property type="entry name" value="PLP-binding_barrel"/>
</dbReference>
<dbReference type="NCBIfam" id="TIGR00492">
    <property type="entry name" value="alr"/>
    <property type="match status" value="1"/>
</dbReference>
<dbReference type="PANTHER" id="PTHR30511">
    <property type="entry name" value="ALANINE RACEMASE"/>
    <property type="match status" value="1"/>
</dbReference>
<dbReference type="PANTHER" id="PTHR30511:SF0">
    <property type="entry name" value="ALANINE RACEMASE, CATABOLIC-RELATED"/>
    <property type="match status" value="1"/>
</dbReference>
<dbReference type="Pfam" id="PF00842">
    <property type="entry name" value="Ala_racemase_C"/>
    <property type="match status" value="1"/>
</dbReference>
<dbReference type="Pfam" id="PF01168">
    <property type="entry name" value="Ala_racemase_N"/>
    <property type="match status" value="1"/>
</dbReference>
<dbReference type="PRINTS" id="PR00992">
    <property type="entry name" value="ALARACEMASE"/>
</dbReference>
<dbReference type="SMART" id="SM01005">
    <property type="entry name" value="Ala_racemase_C"/>
    <property type="match status" value="1"/>
</dbReference>
<dbReference type="SUPFAM" id="SSF50621">
    <property type="entry name" value="Alanine racemase C-terminal domain-like"/>
    <property type="match status" value="1"/>
</dbReference>
<dbReference type="SUPFAM" id="SSF51419">
    <property type="entry name" value="PLP-binding barrel"/>
    <property type="match status" value="1"/>
</dbReference>
<dbReference type="PROSITE" id="PS00395">
    <property type="entry name" value="ALANINE_RACEMASE"/>
    <property type="match status" value="1"/>
</dbReference>
<gene>
    <name type="primary">alr</name>
    <name type="ordered locus">SPG_1604</name>
</gene>
<evidence type="ECO:0000255" key="1">
    <source>
        <dbReference type="HAMAP-Rule" id="MF_01201"/>
    </source>
</evidence>